<keyword id="KW-1015">Disulfide bond</keyword>
<keyword id="KW-0255">Endonuclease</keyword>
<keyword id="KW-0325">Glycoprotein</keyword>
<keyword id="KW-0378">Hydrolase</keyword>
<keyword id="KW-0456">Lyase</keyword>
<keyword id="KW-0458">Lysosome</keyword>
<keyword id="KW-0944">Nitration</keyword>
<keyword id="KW-0540">Nuclease</keyword>
<keyword id="KW-1185">Reference proteome</keyword>
<keyword id="KW-0732">Signal</keyword>
<organism>
    <name type="scientific">Mus musculus</name>
    <name type="common">Mouse</name>
    <dbReference type="NCBI Taxonomy" id="10090"/>
    <lineage>
        <taxon>Eukaryota</taxon>
        <taxon>Metazoa</taxon>
        <taxon>Chordata</taxon>
        <taxon>Craniata</taxon>
        <taxon>Vertebrata</taxon>
        <taxon>Euteleostomi</taxon>
        <taxon>Mammalia</taxon>
        <taxon>Eutheria</taxon>
        <taxon>Euarchontoglires</taxon>
        <taxon>Glires</taxon>
        <taxon>Rodentia</taxon>
        <taxon>Myomorpha</taxon>
        <taxon>Muroidea</taxon>
        <taxon>Muridae</taxon>
        <taxon>Murinae</taxon>
        <taxon>Mus</taxon>
        <taxon>Mus</taxon>
    </lineage>
</organism>
<name>RNAS2_MOUSE</name>
<gene>
    <name type="primary">Rnase2</name>
    <name type="synonym">Ear4</name>
</gene>
<evidence type="ECO:0000250" key="1"/>
<evidence type="ECO:0000250" key="2">
    <source>
        <dbReference type="UniProtKB" id="P10153"/>
    </source>
</evidence>
<evidence type="ECO:0000250" key="3">
    <source>
        <dbReference type="UniProtKB" id="P47784"/>
    </source>
</evidence>
<evidence type="ECO:0000255" key="4"/>
<evidence type="ECO:0000305" key="5"/>
<comment type="function">
    <text>This is a non-secretory ribonuclease. It is a pyrimidine specific nuclease with a slight preference for U. Cytotoxin and helminthotoxin. Possesses a wide variety of biological activities.</text>
</comment>
<comment type="catalytic activity">
    <reaction evidence="3">
        <text>an [RNA] containing cytidine + H2O = an [RNA]-3'-cytidine-3'-phosphate + a 5'-hydroxy-ribonucleotide-3'-[RNA].</text>
        <dbReference type="EC" id="4.6.1.18"/>
    </reaction>
</comment>
<comment type="catalytic activity">
    <reaction evidence="3">
        <text>an [RNA] containing uridine + H2O = an [RNA]-3'-uridine-3'-phosphate + a 5'-hydroxy-ribonucleotide-3'-[RNA].</text>
        <dbReference type="EC" id="4.6.1.18"/>
    </reaction>
</comment>
<comment type="subunit">
    <text evidence="1">Interacts with and forms a tight 1:1 complex with RNH1. Dimerization of two such complexes may occur (By similarity).</text>
</comment>
<comment type="subcellular location">
    <subcellularLocation>
        <location evidence="5">Lysosome</location>
    </subcellularLocation>
    <subcellularLocation>
        <location>Cytoplasmic granule</location>
    </subcellularLocation>
    <text>Matrix of eosinophil's large specific granule.</text>
</comment>
<comment type="similarity">
    <text evidence="5">Belongs to the pancreatic ribonuclease family.</text>
</comment>
<sequence length="155" mass="17723">MGPKLLESRLCLLLLLGLVLMLASCQAQILSQKFYTQHIYNSTYPRCDAVMRVVNRYRPRCKDINTFLHTSFADVVAVCGHPNITCNNLTRKNCHASSFQVFITFCNLTMPTRICTQCRYQTTGSVKYYRVACENRTPQDTPMYPVVPVHLDGTF</sequence>
<proteinExistence type="evidence at protein level"/>
<reference key="1">
    <citation type="journal article" date="1997" name="Nucleic Acids Res.">
        <title>Molecular cloning of four novel murine ribonuclease genes: unusual expansion within the ribonuclease A gene family.</title>
        <authorList>
            <person name="Batten D."/>
            <person name="Dyer K.D."/>
            <person name="Domachowske J.B."/>
            <person name="Rosenberg H.F."/>
        </authorList>
    </citation>
    <scope>NUCLEOTIDE SEQUENCE [GENOMIC DNA]</scope>
    <source>
        <tissue>Fibroblast</tissue>
    </source>
</reference>
<reference key="2">
    <citation type="journal article" date="2008" name="J. Biol. Chem.">
        <title>Post-translational tyrosine nitration of eosinophil granule toxins mediated by eosinophil peroxidase.</title>
        <authorList>
            <person name="Ulrich M."/>
            <person name="Petre A."/>
            <person name="Youhnovski N."/>
            <person name="Proemm F."/>
            <person name="Schirle M."/>
            <person name="Schumm M."/>
            <person name="Pero R.S."/>
            <person name="Doyle A."/>
            <person name="Checkel J."/>
            <person name="Kita H."/>
            <person name="Thiyagarajan N."/>
            <person name="Acharya K.R."/>
            <person name="Schmid-Grendelmeier P."/>
            <person name="Simon H.-U."/>
            <person name="Schwarz H."/>
            <person name="Tsutsui M."/>
            <person name="Shimokawa H."/>
            <person name="Bellon G."/>
            <person name="Lee J.J."/>
            <person name="Przybylski M."/>
            <person name="Doering G."/>
        </authorList>
    </citation>
    <scope>NITRATION</scope>
</reference>
<feature type="signal peptide" evidence="4">
    <location>
        <begin position="1"/>
        <end position="25"/>
    </location>
</feature>
<feature type="chain" id="PRO_0000030882" description="Non-secretory ribonuclease">
    <location>
        <begin position="26"/>
        <end position="155"/>
    </location>
</feature>
<feature type="active site" description="Proton acceptor" evidence="1">
    <location>
        <position position="38"/>
    </location>
</feature>
<feature type="active site" description="Proton donor" evidence="1">
    <location>
        <position position="150"/>
    </location>
</feature>
<feature type="binding site" evidence="1">
    <location>
        <position position="33"/>
    </location>
    <ligand>
        <name>substrate</name>
    </ligand>
</feature>
<feature type="binding site" evidence="1">
    <location>
        <begin position="62"/>
        <end position="66"/>
    </location>
    <ligand>
        <name>substrate</name>
    </ligand>
</feature>
<feature type="modified residue" description="3'-nitrotyrosine" evidence="2">
    <location>
        <position position="57"/>
    </location>
</feature>
<feature type="glycosylation site" description="N-linked (GlcNAc...) asparagine" evidence="4">
    <location>
        <position position="41"/>
    </location>
</feature>
<feature type="glycosylation site" description="N-linked (GlcNAc...) asparagine" evidence="4">
    <location>
        <position position="83"/>
    </location>
</feature>
<feature type="glycosylation site" description="N-linked (GlcNAc...) asparagine" evidence="4">
    <location>
        <position position="88"/>
    </location>
</feature>
<feature type="glycosylation site" description="N-linked (GlcNAc...) asparagine" evidence="4">
    <location>
        <position position="107"/>
    </location>
</feature>
<feature type="disulfide bond" evidence="1">
    <location>
        <begin position="47"/>
        <end position="106"/>
    </location>
</feature>
<feature type="disulfide bond" evidence="1">
    <location>
        <begin position="61"/>
        <end position="118"/>
    </location>
</feature>
<feature type="disulfide bond" evidence="1">
    <location>
        <begin position="79"/>
        <end position="133"/>
    </location>
</feature>
<feature type="disulfide bond" evidence="1">
    <location>
        <begin position="86"/>
        <end position="94"/>
    </location>
</feature>
<dbReference type="EC" id="4.6.1.18" evidence="3"/>
<dbReference type="EMBL" id="AF017259">
    <property type="protein sequence ID" value="AAC53490.1"/>
    <property type="molecule type" value="Genomic_DNA"/>
</dbReference>
<dbReference type="RefSeq" id="NP_001017422.1">
    <property type="nucleotide sequence ID" value="NM_001017422.1"/>
</dbReference>
<dbReference type="SMR" id="O35291"/>
<dbReference type="FunCoup" id="O35291">
    <property type="interactions" value="435"/>
</dbReference>
<dbReference type="STRING" id="10090.ENSMUSP00000056293"/>
<dbReference type="GlyCosmos" id="O35291">
    <property type="glycosylation" value="4 sites, No reported glycans"/>
</dbReference>
<dbReference type="GlyGen" id="O35291">
    <property type="glycosylation" value="4 sites"/>
</dbReference>
<dbReference type="PhosphoSitePlus" id="O35291"/>
<dbReference type="PaxDb" id="10090-ENSMUSP00000056293"/>
<dbReference type="DNASU" id="53877"/>
<dbReference type="GeneID" id="53877"/>
<dbReference type="KEGG" id="mmu:53877"/>
<dbReference type="AGR" id="MGI:1858238"/>
<dbReference type="CTD" id="53877"/>
<dbReference type="MGI" id="MGI:1858238">
    <property type="gene designation" value="Ear4"/>
</dbReference>
<dbReference type="eggNOG" id="ENOG502TF52">
    <property type="taxonomic scope" value="Eukaryota"/>
</dbReference>
<dbReference type="InParanoid" id="O35291"/>
<dbReference type="PhylomeDB" id="O35291"/>
<dbReference type="BioGRID-ORCS" id="53877">
    <property type="hits" value="0 hits in 15 CRISPR screens"/>
</dbReference>
<dbReference type="ChiTaRS" id="Ear2">
    <property type="organism name" value="mouse"/>
</dbReference>
<dbReference type="PRO" id="PR:O35291"/>
<dbReference type="Proteomes" id="UP000000589">
    <property type="component" value="Unplaced"/>
</dbReference>
<dbReference type="RNAct" id="O35291">
    <property type="molecule type" value="protein"/>
</dbReference>
<dbReference type="GO" id="GO:0005764">
    <property type="term" value="C:lysosome"/>
    <property type="evidence" value="ECO:0007669"/>
    <property type="project" value="UniProtKB-SubCell"/>
</dbReference>
<dbReference type="GO" id="GO:0016829">
    <property type="term" value="F:lyase activity"/>
    <property type="evidence" value="ECO:0007669"/>
    <property type="project" value="UniProtKB-KW"/>
</dbReference>
<dbReference type="GO" id="GO:0003676">
    <property type="term" value="F:nucleic acid binding"/>
    <property type="evidence" value="ECO:0007669"/>
    <property type="project" value="InterPro"/>
</dbReference>
<dbReference type="GO" id="GO:0004522">
    <property type="term" value="F:ribonuclease A activity"/>
    <property type="evidence" value="ECO:0007669"/>
    <property type="project" value="UniProtKB-EC"/>
</dbReference>
<dbReference type="CDD" id="cd06265">
    <property type="entry name" value="RNase_A_canonical"/>
    <property type="match status" value="1"/>
</dbReference>
<dbReference type="FunFam" id="3.10.130.10:FF:000001">
    <property type="entry name" value="Ribonuclease pancreatic"/>
    <property type="match status" value="1"/>
</dbReference>
<dbReference type="Gene3D" id="3.10.130.10">
    <property type="entry name" value="Ribonuclease A-like domain"/>
    <property type="match status" value="1"/>
</dbReference>
<dbReference type="InterPro" id="IPR001427">
    <property type="entry name" value="RNaseA"/>
</dbReference>
<dbReference type="InterPro" id="IPR036816">
    <property type="entry name" value="RNaseA-like_dom_sf"/>
</dbReference>
<dbReference type="InterPro" id="IPR023411">
    <property type="entry name" value="RNaseA_AS"/>
</dbReference>
<dbReference type="InterPro" id="IPR023412">
    <property type="entry name" value="RNaseA_domain"/>
</dbReference>
<dbReference type="PANTHER" id="PTHR11437:SF3">
    <property type="entry name" value="EOSINOPHIL CATIONIC PROTEIN"/>
    <property type="match status" value="1"/>
</dbReference>
<dbReference type="PANTHER" id="PTHR11437">
    <property type="entry name" value="RIBONUCLEASE"/>
    <property type="match status" value="1"/>
</dbReference>
<dbReference type="Pfam" id="PF00074">
    <property type="entry name" value="RnaseA"/>
    <property type="match status" value="1"/>
</dbReference>
<dbReference type="PRINTS" id="PR00794">
    <property type="entry name" value="RIBONUCLEASE"/>
</dbReference>
<dbReference type="SMART" id="SM00092">
    <property type="entry name" value="RNAse_Pc"/>
    <property type="match status" value="1"/>
</dbReference>
<dbReference type="SUPFAM" id="SSF54076">
    <property type="entry name" value="RNase A-like"/>
    <property type="match status" value="1"/>
</dbReference>
<dbReference type="PROSITE" id="PS00127">
    <property type="entry name" value="RNASE_PANCREATIC"/>
    <property type="match status" value="1"/>
</dbReference>
<protein>
    <recommendedName>
        <fullName>Non-secretory ribonuclease</fullName>
        <ecNumber evidence="3">4.6.1.18</ecNumber>
    </recommendedName>
    <alternativeName>
        <fullName>Eosinophil cationic-type ribonuclease 4</fullName>
    </alternativeName>
    <alternativeName>
        <fullName>MR-4</fullName>
    </alternativeName>
    <alternativeName>
        <fullName>Ribonuclease 2</fullName>
        <shortName>RNase 2</shortName>
    </alternativeName>
</protein>
<accession>O35291</accession>